<feature type="chain" id="PRO_1000009208" description="UPF0102 protein cgR_1859">
    <location>
        <begin position="1"/>
        <end position="122"/>
    </location>
</feature>
<accession>A4QF37</accession>
<name>Y1859_CORGB</name>
<protein>
    <recommendedName>
        <fullName evidence="1">UPF0102 protein cgR_1859</fullName>
    </recommendedName>
</protein>
<comment type="similarity">
    <text evidence="1">Belongs to the UPF0102 family.</text>
</comment>
<organism>
    <name type="scientific">Corynebacterium glutamicum (strain R)</name>
    <dbReference type="NCBI Taxonomy" id="340322"/>
    <lineage>
        <taxon>Bacteria</taxon>
        <taxon>Bacillati</taxon>
        <taxon>Actinomycetota</taxon>
        <taxon>Actinomycetes</taxon>
        <taxon>Mycobacteriales</taxon>
        <taxon>Corynebacteriaceae</taxon>
        <taxon>Corynebacterium</taxon>
    </lineage>
</organism>
<reference key="1">
    <citation type="journal article" date="2007" name="Microbiology">
        <title>Comparative analysis of the Corynebacterium glutamicum group and complete genome sequence of strain R.</title>
        <authorList>
            <person name="Yukawa H."/>
            <person name="Omumasaba C.A."/>
            <person name="Nonaka H."/>
            <person name="Kos P."/>
            <person name="Okai N."/>
            <person name="Suzuki N."/>
            <person name="Suda M."/>
            <person name="Tsuge Y."/>
            <person name="Watanabe J."/>
            <person name="Ikeda Y."/>
            <person name="Vertes A.A."/>
            <person name="Inui M."/>
        </authorList>
    </citation>
    <scope>NUCLEOTIDE SEQUENCE [LARGE SCALE GENOMIC DNA]</scope>
    <source>
        <strain>R</strain>
    </source>
</reference>
<proteinExistence type="inferred from homology"/>
<dbReference type="EMBL" id="AP009044">
    <property type="protein sequence ID" value="BAF54853.1"/>
    <property type="molecule type" value="Genomic_DNA"/>
</dbReference>
<dbReference type="RefSeq" id="WP_011897426.1">
    <property type="nucleotide sequence ID" value="NC_009342.1"/>
</dbReference>
<dbReference type="SMR" id="A4QF37"/>
<dbReference type="KEGG" id="cgt:cgR_1859"/>
<dbReference type="HOGENOM" id="CLU_115353_2_2_11"/>
<dbReference type="PhylomeDB" id="A4QF37"/>
<dbReference type="Proteomes" id="UP000006698">
    <property type="component" value="Chromosome"/>
</dbReference>
<dbReference type="GO" id="GO:0003676">
    <property type="term" value="F:nucleic acid binding"/>
    <property type="evidence" value="ECO:0007669"/>
    <property type="project" value="InterPro"/>
</dbReference>
<dbReference type="Gene3D" id="3.40.1350.10">
    <property type="match status" value="1"/>
</dbReference>
<dbReference type="HAMAP" id="MF_00048">
    <property type="entry name" value="UPF0102"/>
    <property type="match status" value="1"/>
</dbReference>
<dbReference type="InterPro" id="IPR011335">
    <property type="entry name" value="Restrct_endonuc-II-like"/>
</dbReference>
<dbReference type="InterPro" id="IPR011856">
    <property type="entry name" value="tRNA_endonuc-like_dom_sf"/>
</dbReference>
<dbReference type="InterPro" id="IPR003509">
    <property type="entry name" value="UPF0102_YraN-like"/>
</dbReference>
<dbReference type="NCBIfam" id="NF009154">
    <property type="entry name" value="PRK12497.3-3"/>
    <property type="match status" value="1"/>
</dbReference>
<dbReference type="PANTHER" id="PTHR34039">
    <property type="entry name" value="UPF0102 PROTEIN YRAN"/>
    <property type="match status" value="1"/>
</dbReference>
<dbReference type="PANTHER" id="PTHR34039:SF1">
    <property type="entry name" value="UPF0102 PROTEIN YRAN"/>
    <property type="match status" value="1"/>
</dbReference>
<dbReference type="Pfam" id="PF02021">
    <property type="entry name" value="UPF0102"/>
    <property type="match status" value="1"/>
</dbReference>
<dbReference type="SUPFAM" id="SSF52980">
    <property type="entry name" value="Restriction endonuclease-like"/>
    <property type="match status" value="1"/>
</dbReference>
<sequence length="122" mass="13640">MKTQKQYLGAFGEDVALQQYLDDQATLLDRNVRYSCGELDLIVRLASGVVVFVEVKTRRGSAFDSAAAVNNQKMLRMRRAAALWLEGKPYTPIRFDVVAIVLDPHTGRPGITVYEDVEHGAR</sequence>
<evidence type="ECO:0000255" key="1">
    <source>
        <dbReference type="HAMAP-Rule" id="MF_00048"/>
    </source>
</evidence>
<gene>
    <name type="ordered locus">cgR_1859</name>
</gene>